<reference key="1">
    <citation type="journal article" date="2002" name="J. Bacteriol.">
        <title>Whole-genome comparison of Mycobacterium tuberculosis clinical and laboratory strains.</title>
        <authorList>
            <person name="Fleischmann R.D."/>
            <person name="Alland D."/>
            <person name="Eisen J.A."/>
            <person name="Carpenter L."/>
            <person name="White O."/>
            <person name="Peterson J.D."/>
            <person name="DeBoy R.T."/>
            <person name="Dodson R.J."/>
            <person name="Gwinn M.L."/>
            <person name="Haft D.H."/>
            <person name="Hickey E.K."/>
            <person name="Kolonay J.F."/>
            <person name="Nelson W.C."/>
            <person name="Umayam L.A."/>
            <person name="Ermolaeva M.D."/>
            <person name="Salzberg S.L."/>
            <person name="Delcher A."/>
            <person name="Utterback T.R."/>
            <person name="Weidman J.F."/>
            <person name="Khouri H.M."/>
            <person name="Gill J."/>
            <person name="Mikula A."/>
            <person name="Bishai W."/>
            <person name="Jacobs W.R. Jr."/>
            <person name="Venter J.C."/>
            <person name="Fraser C.M."/>
        </authorList>
    </citation>
    <scope>NUCLEOTIDE SEQUENCE [LARGE SCALE GENOMIC DNA]</scope>
    <source>
        <strain>CDC 1551 / Oshkosh</strain>
    </source>
</reference>
<name>PPE40_MYCTO</name>
<sequence length="615" mass="58390">MVNFSVLPPEINSGRMFFGAGSGPMLAAAAAWDGLAAELGLAAESFGLVTSGLAGGSGQAWQGAAAAAMVVAAAPYAGWLAAAAARAGGAAVQAKAVAGAFEAARAAMVDPVVVAANRSAFVQLVLSNVFGQNAPAIAAAEATYEQMWAADVAAMVGYHGGASAAAAALAPWQQAVPGLSGLLGGAANAPAAAAQGAAQGLAELTLNLGVGNIGSLNLGSGNIGGTNVGSGNVGGTNLGSGNYGSLNWGSGNTGTGNAGSGNTGDYNPGSGNFGSGNFGSGNIGSLNVGSGNFGTLNLANGNNGDVNFGGGNTGDFNFGGGNNGTLNFGFGNTGSGNFGFGNTGNNNIGIGLTGDGQIGIGGLNSGTGNIGFGNSGNNNIGFFNSGDGNIGFFNSGDGNTGFGNAGNINTGFWNAGNLNTGFGSAGNGNVGIFDGGNSNSGSFNVGFQNTGFGNSGAGNTGFFNAGDSNTGFANAGNVNTGFFNGGDINTGGFNGGNVNTGFGSALTQAGANSGFGNLGTGNSGWGNSDPSGTGNSGFFNTGNGNSGFSNAGPAMLPGFNSGFANIGSFNAGIANSGNNLAGISNSGDDSSGAVNSGSQNSGAFNAGVGLSGFFR</sequence>
<evidence type="ECO:0000305" key="1"/>
<dbReference type="EMBL" id="AE000516">
    <property type="protein sequence ID" value="AAK46719.1"/>
    <property type="molecule type" value="Genomic_DNA"/>
</dbReference>
<dbReference type="PIR" id="E70663">
    <property type="entry name" value="E70663"/>
</dbReference>
<dbReference type="RefSeq" id="WP_003904827.1">
    <property type="nucleotide sequence ID" value="NZ_KK341227.1"/>
</dbReference>
<dbReference type="SMR" id="P9WHZ6"/>
<dbReference type="KEGG" id="mtc:MT2425"/>
<dbReference type="PATRIC" id="fig|83331.31.peg.2613"/>
<dbReference type="HOGENOM" id="CLU_000243_4_4_11"/>
<dbReference type="Proteomes" id="UP000001020">
    <property type="component" value="Chromosome"/>
</dbReference>
<dbReference type="GO" id="GO:0052572">
    <property type="term" value="P:response to host immune response"/>
    <property type="evidence" value="ECO:0007669"/>
    <property type="project" value="TreeGrafter"/>
</dbReference>
<dbReference type="FunFam" id="1.20.1260.20:FF:000001">
    <property type="entry name" value="PPE family protein PPE41"/>
    <property type="match status" value="1"/>
</dbReference>
<dbReference type="Gene3D" id="1.20.1260.20">
    <property type="entry name" value="PPE superfamily"/>
    <property type="match status" value="1"/>
</dbReference>
<dbReference type="InterPro" id="IPR002989">
    <property type="entry name" value="Mycobac_pentapep"/>
</dbReference>
<dbReference type="InterPro" id="IPR000030">
    <property type="entry name" value="PPE_dom"/>
</dbReference>
<dbReference type="InterPro" id="IPR038332">
    <property type="entry name" value="PPE_sf"/>
</dbReference>
<dbReference type="PANTHER" id="PTHR46766">
    <property type="entry name" value="GLUTAMINE-RICH PROTEIN 2"/>
    <property type="match status" value="1"/>
</dbReference>
<dbReference type="PANTHER" id="PTHR46766:SF1">
    <property type="entry name" value="GLUTAMINE-RICH PROTEIN 2"/>
    <property type="match status" value="1"/>
</dbReference>
<dbReference type="Pfam" id="PF01469">
    <property type="entry name" value="Pentapeptide_2"/>
    <property type="match status" value="6"/>
</dbReference>
<dbReference type="Pfam" id="PF00823">
    <property type="entry name" value="PPE"/>
    <property type="match status" value="1"/>
</dbReference>
<dbReference type="SUPFAM" id="SSF140459">
    <property type="entry name" value="PE/PPE dimer-like"/>
    <property type="match status" value="1"/>
</dbReference>
<protein>
    <recommendedName>
        <fullName>Uncharacterized PPE family protein PPE40</fullName>
    </recommendedName>
</protein>
<proteinExistence type="inferred from homology"/>
<comment type="similarity">
    <text evidence="1">Belongs to the mycobacterial PPE family.</text>
</comment>
<keyword id="KW-1185">Reference proteome</keyword>
<feature type="chain" id="PRO_0000428095" description="Uncharacterized PPE family protein PPE40">
    <location>
        <begin position="1"/>
        <end position="615"/>
    </location>
</feature>
<accession>P9WHZ6</accession>
<accession>L0T9D9</accession>
<accession>Q79FF2</accession>
<accession>Q7D7A1</accession>
<gene>
    <name type="primary">PPE40</name>
    <name type="ordered locus">MT2425</name>
</gene>
<organism>
    <name type="scientific">Mycobacterium tuberculosis (strain CDC 1551 / Oshkosh)</name>
    <dbReference type="NCBI Taxonomy" id="83331"/>
    <lineage>
        <taxon>Bacteria</taxon>
        <taxon>Bacillati</taxon>
        <taxon>Actinomycetota</taxon>
        <taxon>Actinomycetes</taxon>
        <taxon>Mycobacteriales</taxon>
        <taxon>Mycobacteriaceae</taxon>
        <taxon>Mycobacterium</taxon>
        <taxon>Mycobacterium tuberculosis complex</taxon>
    </lineage>
</organism>